<accession>B4TY59</accession>
<keyword id="KW-0067">ATP-binding</keyword>
<keyword id="KW-0963">Cytoplasm</keyword>
<keyword id="KW-0210">Decarboxylase</keyword>
<keyword id="KW-0312">Gluconeogenesis</keyword>
<keyword id="KW-0456">Lyase</keyword>
<keyword id="KW-0464">Manganese</keyword>
<keyword id="KW-0479">Metal-binding</keyword>
<keyword id="KW-0547">Nucleotide-binding</keyword>
<gene>
    <name evidence="1" type="primary">pckA</name>
    <name type="ordered locus">SeSA_A3698</name>
</gene>
<evidence type="ECO:0000255" key="1">
    <source>
        <dbReference type="HAMAP-Rule" id="MF_00453"/>
    </source>
</evidence>
<name>PCKA_SALSV</name>
<sequence>MRVNNLTPQDLKAYGINDVQDIVYNPSYDTLYQEELNPGLEGYERGVLTNLGAVAVDTGIFTGRSPKDKYIVRDDTTRDTLWWSDKGKGKNDNKPLSQETWQHLKGLVTHQLSGKRLFIVDAFCGANADTRLSVRFITEVAWQAHFVKNMFIRPTDEELVGFKPDFIVMNGAKCTNPQWKEQGLNSENFVAFNLTERIQLIGGTWYGGEMKKGMFSVMNYLLPLKGIASMHCSANVGEKGDVAVFFGLSGTGKTTLSTDPKRRLIGDDEHGWDDDGVFNFEGGCYAKTIKLSKEAEPEIYHAIRRDALLENVTVREDGTVDFDDGSKTENTRVSYPIYHIDNIVKPVSKAGHATKVIFLTADAFGVLPPVSRLTANQTQYHFLSGFTAKLAGTERGVTEPTPTFSACFGAAFLTLHPTQYAEVLVKRMQAAGAQAYLVNTGWNGTGKRISIKDTRAIIDAILNGSLDNAETFRLPLFDLAIPTELPGVDTHILDPRNTYASPEQWQEKATALAKLFIENFEKYTDTPAGEALVSAGPKL</sequence>
<organism>
    <name type="scientific">Salmonella schwarzengrund (strain CVM19633)</name>
    <dbReference type="NCBI Taxonomy" id="439843"/>
    <lineage>
        <taxon>Bacteria</taxon>
        <taxon>Pseudomonadati</taxon>
        <taxon>Pseudomonadota</taxon>
        <taxon>Gammaproteobacteria</taxon>
        <taxon>Enterobacterales</taxon>
        <taxon>Enterobacteriaceae</taxon>
        <taxon>Salmonella</taxon>
    </lineage>
</organism>
<reference key="1">
    <citation type="journal article" date="2011" name="J. Bacteriol.">
        <title>Comparative genomics of 28 Salmonella enterica isolates: evidence for CRISPR-mediated adaptive sublineage evolution.</title>
        <authorList>
            <person name="Fricke W.F."/>
            <person name="Mammel M.K."/>
            <person name="McDermott P.F."/>
            <person name="Tartera C."/>
            <person name="White D.G."/>
            <person name="Leclerc J.E."/>
            <person name="Ravel J."/>
            <person name="Cebula T.A."/>
        </authorList>
    </citation>
    <scope>NUCLEOTIDE SEQUENCE [LARGE SCALE GENOMIC DNA]</scope>
    <source>
        <strain>CVM19633</strain>
    </source>
</reference>
<protein>
    <recommendedName>
        <fullName evidence="1">Phosphoenolpyruvate carboxykinase (ATP)</fullName>
        <shortName evidence="1">PCK</shortName>
        <shortName evidence="1">PEP carboxykinase</shortName>
        <shortName evidence="1">PEPCK</shortName>
        <ecNumber evidence="1">4.1.1.49</ecNumber>
    </recommendedName>
</protein>
<proteinExistence type="inferred from homology"/>
<comment type="function">
    <text evidence="1">Involved in the gluconeogenesis. Catalyzes the conversion of oxaloacetate (OAA) to phosphoenolpyruvate (PEP) through direct phosphoryl transfer between the nucleoside triphosphate and OAA.</text>
</comment>
<comment type="catalytic activity">
    <reaction evidence="1">
        <text>oxaloacetate + ATP = phosphoenolpyruvate + ADP + CO2</text>
        <dbReference type="Rhea" id="RHEA:18617"/>
        <dbReference type="ChEBI" id="CHEBI:16452"/>
        <dbReference type="ChEBI" id="CHEBI:16526"/>
        <dbReference type="ChEBI" id="CHEBI:30616"/>
        <dbReference type="ChEBI" id="CHEBI:58702"/>
        <dbReference type="ChEBI" id="CHEBI:456216"/>
        <dbReference type="EC" id="4.1.1.49"/>
    </reaction>
</comment>
<comment type="cofactor">
    <cofactor evidence="1">
        <name>Mn(2+)</name>
        <dbReference type="ChEBI" id="CHEBI:29035"/>
    </cofactor>
    <text evidence="1">Binds 1 Mn(2+) ion per subunit.</text>
</comment>
<comment type="pathway">
    <text evidence="1">Carbohydrate biosynthesis; gluconeogenesis.</text>
</comment>
<comment type="subunit">
    <text evidence="1">Monomer.</text>
</comment>
<comment type="subcellular location">
    <subcellularLocation>
        <location evidence="1">Cytoplasm</location>
    </subcellularLocation>
</comment>
<comment type="similarity">
    <text evidence="1">Belongs to the phosphoenolpyruvate carboxykinase (ATP) family.</text>
</comment>
<dbReference type="EC" id="4.1.1.49" evidence="1"/>
<dbReference type="EMBL" id="CP001127">
    <property type="protein sequence ID" value="ACF92307.1"/>
    <property type="molecule type" value="Genomic_DNA"/>
</dbReference>
<dbReference type="RefSeq" id="WP_001265689.1">
    <property type="nucleotide sequence ID" value="NC_011094.1"/>
</dbReference>
<dbReference type="SMR" id="B4TY59"/>
<dbReference type="KEGG" id="sew:SeSA_A3698"/>
<dbReference type="HOGENOM" id="CLU_018247_0_1_6"/>
<dbReference type="UniPathway" id="UPA00138"/>
<dbReference type="Proteomes" id="UP000001865">
    <property type="component" value="Chromosome"/>
</dbReference>
<dbReference type="GO" id="GO:0005829">
    <property type="term" value="C:cytosol"/>
    <property type="evidence" value="ECO:0007669"/>
    <property type="project" value="TreeGrafter"/>
</dbReference>
<dbReference type="GO" id="GO:0005524">
    <property type="term" value="F:ATP binding"/>
    <property type="evidence" value="ECO:0007669"/>
    <property type="project" value="UniProtKB-UniRule"/>
</dbReference>
<dbReference type="GO" id="GO:0046872">
    <property type="term" value="F:metal ion binding"/>
    <property type="evidence" value="ECO:0007669"/>
    <property type="project" value="UniProtKB-KW"/>
</dbReference>
<dbReference type="GO" id="GO:0004612">
    <property type="term" value="F:phosphoenolpyruvate carboxykinase (ATP) activity"/>
    <property type="evidence" value="ECO:0007669"/>
    <property type="project" value="UniProtKB-UniRule"/>
</dbReference>
<dbReference type="GO" id="GO:0006094">
    <property type="term" value="P:gluconeogenesis"/>
    <property type="evidence" value="ECO:0007669"/>
    <property type="project" value="UniProtKB-UniRule"/>
</dbReference>
<dbReference type="CDD" id="cd00484">
    <property type="entry name" value="PEPCK_ATP"/>
    <property type="match status" value="1"/>
</dbReference>
<dbReference type="FunFam" id="2.170.8.10:FF:000001">
    <property type="entry name" value="Phosphoenolpyruvate carboxykinase (ATP)"/>
    <property type="match status" value="1"/>
</dbReference>
<dbReference type="FunFam" id="3.40.449.10:FF:000001">
    <property type="entry name" value="Phosphoenolpyruvate carboxykinase (ATP)"/>
    <property type="match status" value="1"/>
</dbReference>
<dbReference type="Gene3D" id="3.90.228.20">
    <property type="match status" value="1"/>
</dbReference>
<dbReference type="Gene3D" id="3.40.449.10">
    <property type="entry name" value="Phosphoenolpyruvate Carboxykinase, domain 1"/>
    <property type="match status" value="1"/>
</dbReference>
<dbReference type="Gene3D" id="2.170.8.10">
    <property type="entry name" value="Phosphoenolpyruvate Carboxykinase, domain 2"/>
    <property type="match status" value="1"/>
</dbReference>
<dbReference type="HAMAP" id="MF_00453">
    <property type="entry name" value="PEPCK_ATP"/>
    <property type="match status" value="1"/>
</dbReference>
<dbReference type="InterPro" id="IPR001272">
    <property type="entry name" value="PEP_carboxykinase_ATP"/>
</dbReference>
<dbReference type="InterPro" id="IPR013035">
    <property type="entry name" value="PEP_carboxykinase_C"/>
</dbReference>
<dbReference type="InterPro" id="IPR008210">
    <property type="entry name" value="PEP_carboxykinase_N"/>
</dbReference>
<dbReference type="InterPro" id="IPR015994">
    <property type="entry name" value="PEPCK_ATP_CS"/>
</dbReference>
<dbReference type="NCBIfam" id="TIGR00224">
    <property type="entry name" value="pckA"/>
    <property type="match status" value="1"/>
</dbReference>
<dbReference type="NCBIfam" id="NF006819">
    <property type="entry name" value="PRK09344.1-1"/>
    <property type="match status" value="1"/>
</dbReference>
<dbReference type="NCBIfam" id="NF006820">
    <property type="entry name" value="PRK09344.1-2"/>
    <property type="match status" value="1"/>
</dbReference>
<dbReference type="NCBIfam" id="NF006821">
    <property type="entry name" value="PRK09344.1-3"/>
    <property type="match status" value="1"/>
</dbReference>
<dbReference type="PANTHER" id="PTHR30031:SF0">
    <property type="entry name" value="PHOSPHOENOLPYRUVATE CARBOXYKINASE (ATP)"/>
    <property type="match status" value="1"/>
</dbReference>
<dbReference type="PANTHER" id="PTHR30031">
    <property type="entry name" value="PHOSPHOENOLPYRUVATE CARBOXYKINASE ATP"/>
    <property type="match status" value="1"/>
</dbReference>
<dbReference type="Pfam" id="PF01293">
    <property type="entry name" value="PEPCK_ATP"/>
    <property type="match status" value="1"/>
</dbReference>
<dbReference type="PIRSF" id="PIRSF006294">
    <property type="entry name" value="PEP_crbxkin"/>
    <property type="match status" value="1"/>
</dbReference>
<dbReference type="SUPFAM" id="SSF68923">
    <property type="entry name" value="PEP carboxykinase N-terminal domain"/>
    <property type="match status" value="1"/>
</dbReference>
<dbReference type="SUPFAM" id="SSF53795">
    <property type="entry name" value="PEP carboxykinase-like"/>
    <property type="match status" value="1"/>
</dbReference>
<dbReference type="PROSITE" id="PS00532">
    <property type="entry name" value="PEPCK_ATP"/>
    <property type="match status" value="1"/>
</dbReference>
<feature type="chain" id="PRO_1000192331" description="Phosphoenolpyruvate carboxykinase (ATP)">
    <location>
        <begin position="1"/>
        <end position="539"/>
    </location>
</feature>
<feature type="binding site" evidence="1">
    <location>
        <position position="64"/>
    </location>
    <ligand>
        <name>substrate</name>
    </ligand>
</feature>
<feature type="binding site" evidence="1">
    <location>
        <position position="206"/>
    </location>
    <ligand>
        <name>substrate</name>
    </ligand>
</feature>
<feature type="binding site" evidence="1">
    <location>
        <position position="212"/>
    </location>
    <ligand>
        <name>ATP</name>
        <dbReference type="ChEBI" id="CHEBI:30616"/>
    </ligand>
</feature>
<feature type="binding site" evidence="1">
    <location>
        <position position="212"/>
    </location>
    <ligand>
        <name>Mn(2+)</name>
        <dbReference type="ChEBI" id="CHEBI:29035"/>
    </ligand>
</feature>
<feature type="binding site" evidence="1">
    <location>
        <position position="212"/>
    </location>
    <ligand>
        <name>substrate</name>
    </ligand>
</feature>
<feature type="binding site" evidence="1">
    <location>
        <position position="231"/>
    </location>
    <ligand>
        <name>ATP</name>
        <dbReference type="ChEBI" id="CHEBI:30616"/>
    </ligand>
</feature>
<feature type="binding site" evidence="1">
    <location>
        <position position="231"/>
    </location>
    <ligand>
        <name>Mn(2+)</name>
        <dbReference type="ChEBI" id="CHEBI:29035"/>
    </ligand>
</feature>
<feature type="binding site" evidence="1">
    <location>
        <begin position="247"/>
        <end position="255"/>
    </location>
    <ligand>
        <name>ATP</name>
        <dbReference type="ChEBI" id="CHEBI:30616"/>
    </ligand>
</feature>
<feature type="binding site" evidence="1">
    <location>
        <position position="268"/>
    </location>
    <ligand>
        <name>Mn(2+)</name>
        <dbReference type="ChEBI" id="CHEBI:29035"/>
    </ligand>
</feature>
<feature type="binding site" evidence="1">
    <location>
        <position position="296"/>
    </location>
    <ligand>
        <name>ATP</name>
        <dbReference type="ChEBI" id="CHEBI:30616"/>
    </ligand>
</feature>
<feature type="binding site" evidence="1">
    <location>
        <position position="332"/>
    </location>
    <ligand>
        <name>ATP</name>
        <dbReference type="ChEBI" id="CHEBI:30616"/>
    </ligand>
</feature>
<feature type="binding site" evidence="1">
    <location>
        <position position="332"/>
    </location>
    <ligand>
        <name>substrate</name>
    </ligand>
</feature>
<feature type="binding site" evidence="1">
    <location>
        <begin position="448"/>
        <end position="449"/>
    </location>
    <ligand>
        <name>ATP</name>
        <dbReference type="ChEBI" id="CHEBI:30616"/>
    </ligand>
</feature>
<feature type="binding site" evidence="1">
    <location>
        <position position="454"/>
    </location>
    <ligand>
        <name>ATP</name>
        <dbReference type="ChEBI" id="CHEBI:30616"/>
    </ligand>
</feature>